<accession>Q9PL77</accession>
<gene>
    <name evidence="1" type="primary">pnp</name>
    <name type="ordered locus">TC_0230</name>
</gene>
<name>PNP_CHLMU</name>
<proteinExistence type="inferred from homology"/>
<feature type="chain" id="PRO_0000329578" description="Polyribonucleotide nucleotidyltransferase">
    <location>
        <begin position="1"/>
        <end position="693"/>
    </location>
</feature>
<feature type="domain" description="KH" evidence="1">
    <location>
        <begin position="552"/>
        <end position="611"/>
    </location>
</feature>
<feature type="domain" description="S1 motif" evidence="1">
    <location>
        <begin position="621"/>
        <end position="689"/>
    </location>
</feature>
<feature type="binding site" evidence="1">
    <location>
        <position position="485"/>
    </location>
    <ligand>
        <name>Mg(2+)</name>
        <dbReference type="ChEBI" id="CHEBI:18420"/>
    </ligand>
</feature>
<feature type="binding site" evidence="1">
    <location>
        <position position="491"/>
    </location>
    <ligand>
        <name>Mg(2+)</name>
        <dbReference type="ChEBI" id="CHEBI:18420"/>
    </ligand>
</feature>
<comment type="function">
    <text evidence="1">Involved in mRNA degradation. Catalyzes the phosphorolysis of single-stranded polyribonucleotides processively in the 3'- to 5'-direction.</text>
</comment>
<comment type="catalytic activity">
    <reaction evidence="1">
        <text>RNA(n+1) + phosphate = RNA(n) + a ribonucleoside 5'-diphosphate</text>
        <dbReference type="Rhea" id="RHEA:22096"/>
        <dbReference type="Rhea" id="RHEA-COMP:14527"/>
        <dbReference type="Rhea" id="RHEA-COMP:17342"/>
        <dbReference type="ChEBI" id="CHEBI:43474"/>
        <dbReference type="ChEBI" id="CHEBI:57930"/>
        <dbReference type="ChEBI" id="CHEBI:140395"/>
        <dbReference type="EC" id="2.7.7.8"/>
    </reaction>
</comment>
<comment type="cofactor">
    <cofactor evidence="1">
        <name>Mg(2+)</name>
        <dbReference type="ChEBI" id="CHEBI:18420"/>
    </cofactor>
</comment>
<comment type="subcellular location">
    <subcellularLocation>
        <location evidence="1">Cytoplasm</location>
    </subcellularLocation>
</comment>
<comment type="similarity">
    <text evidence="1">Belongs to the polyribonucleotide nucleotidyltransferase family.</text>
</comment>
<protein>
    <recommendedName>
        <fullName evidence="1">Polyribonucleotide nucleotidyltransferase</fullName>
        <ecNumber evidence="1">2.7.7.8</ecNumber>
    </recommendedName>
    <alternativeName>
        <fullName evidence="1">Polynucleotide phosphorylase</fullName>
        <shortName evidence="1">PNPase</shortName>
    </alternativeName>
</protein>
<keyword id="KW-0963">Cytoplasm</keyword>
<keyword id="KW-0460">Magnesium</keyword>
<keyword id="KW-0479">Metal-binding</keyword>
<keyword id="KW-0548">Nucleotidyltransferase</keyword>
<keyword id="KW-0694">RNA-binding</keyword>
<keyword id="KW-0808">Transferase</keyword>
<sequence length="693" mass="75334">MAFETFSVALDKDKTLIFETGKIARQANGAVLVKMNETWVFSSACAASLSEAVDFLPFRVDYQEKFSSAGKTSGGFLKREGRPSEKEILISRLIDRSLRPSFPNRLMQDIQVLSYVWSYDGKTLPDPLAICGASAALAISEVPQNCIVAGVRVGLVEGKWVVNPTKDELDASKLDLVMAGTASAVLMIEGHCDFLTEEQVLEAIAFGQKYIAKICDAIEAWQKAIGKEKQLSAVLDLPEDVQNVVSNFIREKFEKALSFRDRDALEQVSKELEESVVANLVQEESDFSLLNVKAAFKNAKSNQMRALIRDLGIRVDGRSTTEIRPISIEVSFLPRTHGSCLFTRGETQSVAVCTLGGESMAQRFEDLNGDGAARFYLQYFFPPFSVGEVGRIGSPGRREIGHGKLAEKALSHVLPEASRFPYTVRVESNITESNGSSSMASVCGGCLSLMDAGVPIKAPVAGIAMGLILDQDKAIVLSDISGIEDHLGDMDFKVAGTEEGITAFQMDIKVEGITHEIMEQALAQAKQGRSHILNLMTQVMSSPNDSVSRYAPRIETMQINTSKIATVIGPGGKQIRQIIERSGAQVDINDNGLINISANTQESIDKAKELIEGLTGEVEVGKIYNGRVTSVVAFGAFVEVLPGKEGLCHISELSKQKVDNVADFVKEGDRLAVKLLSINEKGQLKLSHKATLE</sequence>
<organism>
    <name type="scientific">Chlamydia muridarum (strain MoPn / Nigg)</name>
    <dbReference type="NCBI Taxonomy" id="243161"/>
    <lineage>
        <taxon>Bacteria</taxon>
        <taxon>Pseudomonadati</taxon>
        <taxon>Chlamydiota</taxon>
        <taxon>Chlamydiia</taxon>
        <taxon>Chlamydiales</taxon>
        <taxon>Chlamydiaceae</taxon>
        <taxon>Chlamydia/Chlamydophila group</taxon>
        <taxon>Chlamydia</taxon>
    </lineage>
</organism>
<evidence type="ECO:0000255" key="1">
    <source>
        <dbReference type="HAMAP-Rule" id="MF_01595"/>
    </source>
</evidence>
<reference key="1">
    <citation type="journal article" date="2000" name="Nucleic Acids Res.">
        <title>Genome sequences of Chlamydia trachomatis MoPn and Chlamydia pneumoniae AR39.</title>
        <authorList>
            <person name="Read T.D."/>
            <person name="Brunham R.C."/>
            <person name="Shen C."/>
            <person name="Gill S.R."/>
            <person name="Heidelberg J.F."/>
            <person name="White O."/>
            <person name="Hickey E.K."/>
            <person name="Peterson J.D."/>
            <person name="Utterback T.R."/>
            <person name="Berry K.J."/>
            <person name="Bass S."/>
            <person name="Linher K.D."/>
            <person name="Weidman J.F."/>
            <person name="Khouri H.M."/>
            <person name="Craven B."/>
            <person name="Bowman C."/>
            <person name="Dodson R.J."/>
            <person name="Gwinn M.L."/>
            <person name="Nelson W.C."/>
            <person name="DeBoy R.T."/>
            <person name="Kolonay J.F."/>
            <person name="McClarty G."/>
            <person name="Salzberg S.L."/>
            <person name="Eisen J.A."/>
            <person name="Fraser C.M."/>
        </authorList>
    </citation>
    <scope>NUCLEOTIDE SEQUENCE [LARGE SCALE GENOMIC DNA]</scope>
    <source>
        <strain>MoPn / Nigg</strain>
    </source>
</reference>
<dbReference type="EC" id="2.7.7.8" evidence="1"/>
<dbReference type="EMBL" id="AE002160">
    <property type="protein sequence ID" value="AAF39102.1"/>
    <property type="molecule type" value="Genomic_DNA"/>
</dbReference>
<dbReference type="PIR" id="G81725">
    <property type="entry name" value="G81725"/>
</dbReference>
<dbReference type="RefSeq" id="WP_010229870.1">
    <property type="nucleotide sequence ID" value="NZ_CP063055.1"/>
</dbReference>
<dbReference type="SMR" id="Q9PL77"/>
<dbReference type="GeneID" id="1246399"/>
<dbReference type="KEGG" id="cmu:TC_0230"/>
<dbReference type="eggNOG" id="COG1185">
    <property type="taxonomic scope" value="Bacteria"/>
</dbReference>
<dbReference type="HOGENOM" id="CLU_004217_2_2_0"/>
<dbReference type="OrthoDB" id="9804305at2"/>
<dbReference type="Proteomes" id="UP000000800">
    <property type="component" value="Chromosome"/>
</dbReference>
<dbReference type="GO" id="GO:0005829">
    <property type="term" value="C:cytosol"/>
    <property type="evidence" value="ECO:0007669"/>
    <property type="project" value="TreeGrafter"/>
</dbReference>
<dbReference type="GO" id="GO:0000175">
    <property type="term" value="F:3'-5'-RNA exonuclease activity"/>
    <property type="evidence" value="ECO:0007669"/>
    <property type="project" value="TreeGrafter"/>
</dbReference>
<dbReference type="GO" id="GO:0000287">
    <property type="term" value="F:magnesium ion binding"/>
    <property type="evidence" value="ECO:0007669"/>
    <property type="project" value="UniProtKB-UniRule"/>
</dbReference>
<dbReference type="GO" id="GO:0004654">
    <property type="term" value="F:polyribonucleotide nucleotidyltransferase activity"/>
    <property type="evidence" value="ECO:0007669"/>
    <property type="project" value="UniProtKB-UniRule"/>
</dbReference>
<dbReference type="GO" id="GO:0003723">
    <property type="term" value="F:RNA binding"/>
    <property type="evidence" value="ECO:0007669"/>
    <property type="project" value="UniProtKB-UniRule"/>
</dbReference>
<dbReference type="GO" id="GO:0006402">
    <property type="term" value="P:mRNA catabolic process"/>
    <property type="evidence" value="ECO:0007669"/>
    <property type="project" value="UniProtKB-UniRule"/>
</dbReference>
<dbReference type="GO" id="GO:0006396">
    <property type="term" value="P:RNA processing"/>
    <property type="evidence" value="ECO:0007669"/>
    <property type="project" value="InterPro"/>
</dbReference>
<dbReference type="CDD" id="cd02393">
    <property type="entry name" value="KH-I_PNPase"/>
    <property type="match status" value="1"/>
</dbReference>
<dbReference type="CDD" id="cd11363">
    <property type="entry name" value="RNase_PH_PNPase_1"/>
    <property type="match status" value="1"/>
</dbReference>
<dbReference type="CDD" id="cd11364">
    <property type="entry name" value="RNase_PH_PNPase_2"/>
    <property type="match status" value="1"/>
</dbReference>
<dbReference type="CDD" id="cd04472">
    <property type="entry name" value="S1_PNPase"/>
    <property type="match status" value="1"/>
</dbReference>
<dbReference type="FunFam" id="3.30.1370.10:FF:000001">
    <property type="entry name" value="Polyribonucleotide nucleotidyltransferase"/>
    <property type="match status" value="1"/>
</dbReference>
<dbReference type="FunFam" id="3.30.230.70:FF:000001">
    <property type="entry name" value="Polyribonucleotide nucleotidyltransferase"/>
    <property type="match status" value="1"/>
</dbReference>
<dbReference type="FunFam" id="3.30.230.70:FF:000002">
    <property type="entry name" value="Polyribonucleotide nucleotidyltransferase"/>
    <property type="match status" value="1"/>
</dbReference>
<dbReference type="FunFam" id="2.40.50.140:FF:000158">
    <property type="entry name" value="Polyribonucleotide nucleotidyltransferase 1, chloroplastic"/>
    <property type="match status" value="1"/>
</dbReference>
<dbReference type="Gene3D" id="3.30.230.70">
    <property type="entry name" value="GHMP Kinase, N-terminal domain"/>
    <property type="match status" value="2"/>
</dbReference>
<dbReference type="Gene3D" id="3.30.1370.10">
    <property type="entry name" value="K Homology domain, type 1"/>
    <property type="match status" value="1"/>
</dbReference>
<dbReference type="Gene3D" id="2.40.50.140">
    <property type="entry name" value="Nucleic acid-binding proteins"/>
    <property type="match status" value="1"/>
</dbReference>
<dbReference type="HAMAP" id="MF_01595">
    <property type="entry name" value="PNPase"/>
    <property type="match status" value="1"/>
</dbReference>
<dbReference type="InterPro" id="IPR001247">
    <property type="entry name" value="ExoRNase_PH_dom1"/>
</dbReference>
<dbReference type="InterPro" id="IPR015847">
    <property type="entry name" value="ExoRNase_PH_dom2"/>
</dbReference>
<dbReference type="InterPro" id="IPR036345">
    <property type="entry name" value="ExoRNase_PH_dom2_sf"/>
</dbReference>
<dbReference type="InterPro" id="IPR004087">
    <property type="entry name" value="KH_dom"/>
</dbReference>
<dbReference type="InterPro" id="IPR004088">
    <property type="entry name" value="KH_dom_type_1"/>
</dbReference>
<dbReference type="InterPro" id="IPR036612">
    <property type="entry name" value="KH_dom_type_1_sf"/>
</dbReference>
<dbReference type="InterPro" id="IPR012340">
    <property type="entry name" value="NA-bd_OB-fold"/>
</dbReference>
<dbReference type="InterPro" id="IPR012162">
    <property type="entry name" value="PNPase"/>
</dbReference>
<dbReference type="InterPro" id="IPR027408">
    <property type="entry name" value="PNPase/RNase_PH_dom_sf"/>
</dbReference>
<dbReference type="InterPro" id="IPR015848">
    <property type="entry name" value="PNPase_PH_RNA-bd_bac/org-type"/>
</dbReference>
<dbReference type="InterPro" id="IPR036456">
    <property type="entry name" value="PNPase_PH_RNA-bd_sf"/>
</dbReference>
<dbReference type="InterPro" id="IPR020568">
    <property type="entry name" value="Ribosomal_Su5_D2-typ_SF"/>
</dbReference>
<dbReference type="InterPro" id="IPR003029">
    <property type="entry name" value="S1_domain"/>
</dbReference>
<dbReference type="NCBIfam" id="TIGR03591">
    <property type="entry name" value="polynuc_phos"/>
    <property type="match status" value="1"/>
</dbReference>
<dbReference type="NCBIfam" id="NF008805">
    <property type="entry name" value="PRK11824.1"/>
    <property type="match status" value="1"/>
</dbReference>
<dbReference type="PANTHER" id="PTHR11252">
    <property type="entry name" value="POLYRIBONUCLEOTIDE NUCLEOTIDYLTRANSFERASE"/>
    <property type="match status" value="1"/>
</dbReference>
<dbReference type="PANTHER" id="PTHR11252:SF0">
    <property type="entry name" value="POLYRIBONUCLEOTIDE NUCLEOTIDYLTRANSFERASE 1, MITOCHONDRIAL"/>
    <property type="match status" value="1"/>
</dbReference>
<dbReference type="Pfam" id="PF00013">
    <property type="entry name" value="KH_1"/>
    <property type="match status" value="1"/>
</dbReference>
<dbReference type="Pfam" id="PF03726">
    <property type="entry name" value="PNPase"/>
    <property type="match status" value="1"/>
</dbReference>
<dbReference type="Pfam" id="PF01138">
    <property type="entry name" value="RNase_PH"/>
    <property type="match status" value="2"/>
</dbReference>
<dbReference type="Pfam" id="PF03725">
    <property type="entry name" value="RNase_PH_C"/>
    <property type="match status" value="2"/>
</dbReference>
<dbReference type="Pfam" id="PF00575">
    <property type="entry name" value="S1"/>
    <property type="match status" value="1"/>
</dbReference>
<dbReference type="PIRSF" id="PIRSF005499">
    <property type="entry name" value="PNPase"/>
    <property type="match status" value="1"/>
</dbReference>
<dbReference type="SMART" id="SM00322">
    <property type="entry name" value="KH"/>
    <property type="match status" value="1"/>
</dbReference>
<dbReference type="SMART" id="SM00316">
    <property type="entry name" value="S1"/>
    <property type="match status" value="1"/>
</dbReference>
<dbReference type="SUPFAM" id="SSF54791">
    <property type="entry name" value="Eukaryotic type KH-domain (KH-domain type I)"/>
    <property type="match status" value="1"/>
</dbReference>
<dbReference type="SUPFAM" id="SSF50249">
    <property type="entry name" value="Nucleic acid-binding proteins"/>
    <property type="match status" value="1"/>
</dbReference>
<dbReference type="SUPFAM" id="SSF46915">
    <property type="entry name" value="Polynucleotide phosphorylase/guanosine pentaphosphate synthase (PNPase/GPSI), domain 3"/>
    <property type="match status" value="1"/>
</dbReference>
<dbReference type="SUPFAM" id="SSF55666">
    <property type="entry name" value="Ribonuclease PH domain 2-like"/>
    <property type="match status" value="2"/>
</dbReference>
<dbReference type="SUPFAM" id="SSF54211">
    <property type="entry name" value="Ribosomal protein S5 domain 2-like"/>
    <property type="match status" value="2"/>
</dbReference>
<dbReference type="PROSITE" id="PS50084">
    <property type="entry name" value="KH_TYPE_1"/>
    <property type="match status" value="1"/>
</dbReference>
<dbReference type="PROSITE" id="PS50126">
    <property type="entry name" value="S1"/>
    <property type="match status" value="1"/>
</dbReference>